<organism>
    <name type="scientific">Frankia alni (strain DSM 45986 / CECT 9034 / ACN14a)</name>
    <dbReference type="NCBI Taxonomy" id="326424"/>
    <lineage>
        <taxon>Bacteria</taxon>
        <taxon>Bacillati</taxon>
        <taxon>Actinomycetota</taxon>
        <taxon>Actinomycetes</taxon>
        <taxon>Frankiales</taxon>
        <taxon>Frankiaceae</taxon>
        <taxon>Frankia</taxon>
    </lineage>
</organism>
<gene>
    <name evidence="1" type="primary">rpsD</name>
    <name type="ordered locus">FRAAL1109</name>
</gene>
<comment type="function">
    <text evidence="1">One of the primary rRNA binding proteins, it binds directly to 16S rRNA where it nucleates assembly of the body of the 30S subunit.</text>
</comment>
<comment type="function">
    <text evidence="1">With S5 and S12 plays an important role in translational accuracy.</text>
</comment>
<comment type="subunit">
    <text evidence="1">Part of the 30S ribosomal subunit. Contacts protein S5. The interaction surface between S4 and S5 is involved in control of translational fidelity.</text>
</comment>
<comment type="similarity">
    <text evidence="1">Belongs to the universal ribosomal protein uS4 family.</text>
</comment>
<protein>
    <recommendedName>
        <fullName evidence="1">Small ribosomal subunit protein uS4</fullName>
    </recommendedName>
    <alternativeName>
        <fullName evidence="2">30S ribosomal protein S4</fullName>
    </alternativeName>
</protein>
<dbReference type="EMBL" id="CT573213">
    <property type="protein sequence ID" value="CAJ59773.1"/>
    <property type="molecule type" value="Genomic_DNA"/>
</dbReference>
<dbReference type="RefSeq" id="WP_011602317.1">
    <property type="nucleotide sequence ID" value="NC_008278.1"/>
</dbReference>
<dbReference type="SMR" id="Q0RRP4"/>
<dbReference type="STRING" id="326424.FRAAL1109"/>
<dbReference type="KEGG" id="fal:FRAAL1109"/>
<dbReference type="eggNOG" id="COG0522">
    <property type="taxonomic scope" value="Bacteria"/>
</dbReference>
<dbReference type="HOGENOM" id="CLU_092403_0_2_11"/>
<dbReference type="OrthoDB" id="9803672at2"/>
<dbReference type="Proteomes" id="UP000000657">
    <property type="component" value="Chromosome"/>
</dbReference>
<dbReference type="GO" id="GO:0015935">
    <property type="term" value="C:small ribosomal subunit"/>
    <property type="evidence" value="ECO:0007669"/>
    <property type="project" value="InterPro"/>
</dbReference>
<dbReference type="GO" id="GO:0019843">
    <property type="term" value="F:rRNA binding"/>
    <property type="evidence" value="ECO:0007669"/>
    <property type="project" value="UniProtKB-UniRule"/>
</dbReference>
<dbReference type="GO" id="GO:0003735">
    <property type="term" value="F:structural constituent of ribosome"/>
    <property type="evidence" value="ECO:0007669"/>
    <property type="project" value="InterPro"/>
</dbReference>
<dbReference type="GO" id="GO:0042274">
    <property type="term" value="P:ribosomal small subunit biogenesis"/>
    <property type="evidence" value="ECO:0007669"/>
    <property type="project" value="TreeGrafter"/>
</dbReference>
<dbReference type="GO" id="GO:0006412">
    <property type="term" value="P:translation"/>
    <property type="evidence" value="ECO:0007669"/>
    <property type="project" value="UniProtKB-UniRule"/>
</dbReference>
<dbReference type="CDD" id="cd00165">
    <property type="entry name" value="S4"/>
    <property type="match status" value="1"/>
</dbReference>
<dbReference type="FunFam" id="3.10.290.10:FF:000001">
    <property type="entry name" value="30S ribosomal protein S4"/>
    <property type="match status" value="1"/>
</dbReference>
<dbReference type="Gene3D" id="1.10.1050.10">
    <property type="entry name" value="Ribosomal Protein S4 Delta 41, Chain A, domain 1"/>
    <property type="match status" value="1"/>
</dbReference>
<dbReference type="Gene3D" id="3.10.290.10">
    <property type="entry name" value="RNA-binding S4 domain"/>
    <property type="match status" value="1"/>
</dbReference>
<dbReference type="HAMAP" id="MF_01306_B">
    <property type="entry name" value="Ribosomal_uS4_B"/>
    <property type="match status" value="1"/>
</dbReference>
<dbReference type="InterPro" id="IPR022801">
    <property type="entry name" value="Ribosomal_uS4"/>
</dbReference>
<dbReference type="InterPro" id="IPR005709">
    <property type="entry name" value="Ribosomal_uS4_bac-type"/>
</dbReference>
<dbReference type="InterPro" id="IPR001912">
    <property type="entry name" value="Ribosomal_uS4_N"/>
</dbReference>
<dbReference type="InterPro" id="IPR002942">
    <property type="entry name" value="S4_RNA-bd"/>
</dbReference>
<dbReference type="InterPro" id="IPR036986">
    <property type="entry name" value="S4_RNA-bd_sf"/>
</dbReference>
<dbReference type="NCBIfam" id="NF003717">
    <property type="entry name" value="PRK05327.1"/>
    <property type="match status" value="1"/>
</dbReference>
<dbReference type="NCBIfam" id="TIGR01017">
    <property type="entry name" value="rpsD_bact"/>
    <property type="match status" value="1"/>
</dbReference>
<dbReference type="PANTHER" id="PTHR11831">
    <property type="entry name" value="30S 40S RIBOSOMAL PROTEIN"/>
    <property type="match status" value="1"/>
</dbReference>
<dbReference type="PANTHER" id="PTHR11831:SF4">
    <property type="entry name" value="SMALL RIBOSOMAL SUBUNIT PROTEIN US4M"/>
    <property type="match status" value="1"/>
</dbReference>
<dbReference type="Pfam" id="PF00163">
    <property type="entry name" value="Ribosomal_S4"/>
    <property type="match status" value="1"/>
</dbReference>
<dbReference type="Pfam" id="PF01479">
    <property type="entry name" value="S4"/>
    <property type="match status" value="1"/>
</dbReference>
<dbReference type="SMART" id="SM01390">
    <property type="entry name" value="Ribosomal_S4"/>
    <property type="match status" value="1"/>
</dbReference>
<dbReference type="SMART" id="SM00363">
    <property type="entry name" value="S4"/>
    <property type="match status" value="1"/>
</dbReference>
<dbReference type="SUPFAM" id="SSF55174">
    <property type="entry name" value="Alpha-L RNA-binding motif"/>
    <property type="match status" value="1"/>
</dbReference>
<dbReference type="PROSITE" id="PS50889">
    <property type="entry name" value="S4"/>
    <property type="match status" value="1"/>
</dbReference>
<accession>Q0RRP4</accession>
<reference key="1">
    <citation type="journal article" date="2007" name="Genome Res.">
        <title>Genome characteristics of facultatively symbiotic Frankia sp. strains reflect host range and host plant biogeography.</title>
        <authorList>
            <person name="Normand P."/>
            <person name="Lapierre P."/>
            <person name="Tisa L.S."/>
            <person name="Gogarten J.P."/>
            <person name="Alloisio N."/>
            <person name="Bagnarol E."/>
            <person name="Bassi C.A."/>
            <person name="Berry A.M."/>
            <person name="Bickhart D.M."/>
            <person name="Choisne N."/>
            <person name="Couloux A."/>
            <person name="Cournoyer B."/>
            <person name="Cruveiller S."/>
            <person name="Daubin V."/>
            <person name="Demange N."/>
            <person name="Francino M.P."/>
            <person name="Goltsman E."/>
            <person name="Huang Y."/>
            <person name="Kopp O.R."/>
            <person name="Labarre L."/>
            <person name="Lapidus A."/>
            <person name="Lavire C."/>
            <person name="Marechal J."/>
            <person name="Martinez M."/>
            <person name="Mastronunzio J.E."/>
            <person name="Mullin B.C."/>
            <person name="Niemann J."/>
            <person name="Pujic P."/>
            <person name="Rawnsley T."/>
            <person name="Rouy Z."/>
            <person name="Schenowitz C."/>
            <person name="Sellstedt A."/>
            <person name="Tavares F."/>
            <person name="Tomkins J.P."/>
            <person name="Vallenet D."/>
            <person name="Valverde C."/>
            <person name="Wall L.G."/>
            <person name="Wang Y."/>
            <person name="Medigue C."/>
            <person name="Benson D.R."/>
        </authorList>
    </citation>
    <scope>NUCLEOTIDE SEQUENCE [LARGE SCALE GENOMIC DNA]</scope>
    <source>
        <strain>DSM 45986 / CECT 9034 / ACN14a</strain>
    </source>
</reference>
<feature type="chain" id="PRO_0000293285" description="Small ribosomal subunit protein uS4">
    <location>
        <begin position="1"/>
        <end position="209"/>
    </location>
</feature>
<feature type="domain" description="S4 RNA-binding" evidence="1">
    <location>
        <begin position="98"/>
        <end position="164"/>
    </location>
</feature>
<sequence length="209" mass="23878">MARYTGADCKRCRREKTKLFLKGSKCDTPKCPIEIRPYPPGEHGRGRTKDSEYLLQKREKQKCARIYGILEKQFRGYYDEANRRAGKTGDELLKILESRLDNVVYRGGFAPSRDAARQAVRHGHVQVNGRKVDIPSYRISENDIVEIAPKARELTPFIVARETAGQGRAVPAWLESIPSQMRILVHSLPARQVIDTQVQEQLIVELYSK</sequence>
<name>RS4_FRAAA</name>
<proteinExistence type="inferred from homology"/>
<keyword id="KW-1185">Reference proteome</keyword>
<keyword id="KW-0687">Ribonucleoprotein</keyword>
<keyword id="KW-0689">Ribosomal protein</keyword>
<keyword id="KW-0694">RNA-binding</keyword>
<keyword id="KW-0699">rRNA-binding</keyword>
<evidence type="ECO:0000255" key="1">
    <source>
        <dbReference type="HAMAP-Rule" id="MF_01306"/>
    </source>
</evidence>
<evidence type="ECO:0000305" key="2"/>